<protein>
    <recommendedName>
        <fullName>Retinoic acid early-inducible protein 1-beta</fullName>
        <shortName>RAE-1-beta</shortName>
    </recommendedName>
</protein>
<dbReference type="EMBL" id="D64161">
    <property type="protein sequence ID" value="BAA19485.1"/>
    <property type="molecule type" value="mRNA"/>
</dbReference>
<dbReference type="EMBL" id="BC132022">
    <property type="protein sequence ID" value="AAI32023.1"/>
    <property type="molecule type" value="mRNA"/>
</dbReference>
<dbReference type="EMBL" id="BC132024">
    <property type="protein sequence ID" value="AAI32025.1"/>
    <property type="molecule type" value="mRNA"/>
</dbReference>
<dbReference type="RefSeq" id="NP_033043.1">
    <property type="nucleotide sequence ID" value="NM_009017.1"/>
</dbReference>
<dbReference type="PDB" id="1JFM">
    <property type="method" value="X-ray"/>
    <property type="resolution" value="2.85 A"/>
    <property type="chains" value="A/B/C/D/E=31-204"/>
</dbReference>
<dbReference type="PDB" id="4PP8">
    <property type="method" value="X-ray"/>
    <property type="resolution" value="1.95 A"/>
    <property type="chains" value="C/D=31-204"/>
</dbReference>
<dbReference type="PDBsum" id="1JFM"/>
<dbReference type="PDBsum" id="4PP8"/>
<dbReference type="SMR" id="O08603"/>
<dbReference type="FunCoup" id="O08603">
    <property type="interactions" value="121"/>
</dbReference>
<dbReference type="IntAct" id="O08603">
    <property type="interactions" value="1"/>
</dbReference>
<dbReference type="GlyCosmos" id="O08603">
    <property type="glycosylation" value="5 sites, No reported glycans"/>
</dbReference>
<dbReference type="GlyGen" id="O08603">
    <property type="glycosylation" value="5 sites"/>
</dbReference>
<dbReference type="iPTMnet" id="O08603"/>
<dbReference type="PhosphoSitePlus" id="O08603"/>
<dbReference type="SwissPalm" id="O08603"/>
<dbReference type="PeptideAtlas" id="O08603"/>
<dbReference type="ProteomicsDB" id="253165"/>
<dbReference type="Pumba" id="O08603"/>
<dbReference type="DNASU" id="19369"/>
<dbReference type="GeneID" id="19369"/>
<dbReference type="KEGG" id="mmu:19369"/>
<dbReference type="AGR" id="MGI:109432"/>
<dbReference type="CTD" id="19369"/>
<dbReference type="MGI" id="MGI:109432">
    <property type="gene designation" value="Raet1b"/>
</dbReference>
<dbReference type="InParanoid" id="O08603"/>
<dbReference type="BioGRID-ORCS" id="19369">
    <property type="hits" value="0 hits in 16 CRISPR screens"/>
</dbReference>
<dbReference type="EvolutionaryTrace" id="O08603"/>
<dbReference type="PRO" id="PR:O08603"/>
<dbReference type="Proteomes" id="UP000000589">
    <property type="component" value="Unplaced"/>
</dbReference>
<dbReference type="RNAct" id="O08603">
    <property type="molecule type" value="protein"/>
</dbReference>
<dbReference type="GO" id="GO:0009897">
    <property type="term" value="C:external side of plasma membrane"/>
    <property type="evidence" value="ECO:0000314"/>
    <property type="project" value="MGI"/>
</dbReference>
<dbReference type="GO" id="GO:0005886">
    <property type="term" value="C:plasma membrane"/>
    <property type="evidence" value="ECO:0000314"/>
    <property type="project" value="UniProtKB"/>
</dbReference>
<dbReference type="GO" id="GO:0046703">
    <property type="term" value="F:natural killer cell lectin-like receptor binding"/>
    <property type="evidence" value="ECO:0000314"/>
    <property type="project" value="UniProtKB"/>
</dbReference>
<dbReference type="GO" id="GO:0071360">
    <property type="term" value="P:cellular response to exogenous dsRNA"/>
    <property type="evidence" value="ECO:0000314"/>
    <property type="project" value="MGI"/>
</dbReference>
<dbReference type="GO" id="GO:0071222">
    <property type="term" value="P:cellular response to lipopolysaccharide"/>
    <property type="evidence" value="ECO:0000314"/>
    <property type="project" value="MGI"/>
</dbReference>
<dbReference type="GO" id="GO:0042742">
    <property type="term" value="P:defense response to bacterium"/>
    <property type="evidence" value="ECO:0000314"/>
    <property type="project" value="MGI"/>
</dbReference>
<dbReference type="GO" id="GO:0002839">
    <property type="term" value="P:positive regulation of immune response to tumor cell"/>
    <property type="evidence" value="ECO:0000314"/>
    <property type="project" value="MGI"/>
</dbReference>
<dbReference type="GO" id="GO:0043032">
    <property type="term" value="P:positive regulation of macrophage activation"/>
    <property type="evidence" value="ECO:0000314"/>
    <property type="project" value="MGI"/>
</dbReference>
<dbReference type="GO" id="GO:0032816">
    <property type="term" value="P:positive regulation of natural killer cell activation"/>
    <property type="evidence" value="ECO:0000314"/>
    <property type="project" value="MGI"/>
</dbReference>
<dbReference type="GO" id="GO:0045429">
    <property type="term" value="P:positive regulation of nitric oxide biosynthetic process"/>
    <property type="evidence" value="ECO:0000314"/>
    <property type="project" value="MGI"/>
</dbReference>
<dbReference type="GO" id="GO:0032729">
    <property type="term" value="P:positive regulation of type II interferon production"/>
    <property type="evidence" value="ECO:0000314"/>
    <property type="project" value="MGI"/>
</dbReference>
<dbReference type="GO" id="GO:0042271">
    <property type="term" value="P:susceptibility to natural killer cell mediated cytotoxicity"/>
    <property type="evidence" value="ECO:0000314"/>
    <property type="project" value="MGI"/>
</dbReference>
<dbReference type="FunFam" id="3.30.500.10:FF:000004">
    <property type="entry name" value="Retinoic acid early-inducible protein 1-beta"/>
    <property type="match status" value="1"/>
</dbReference>
<dbReference type="Gene3D" id="3.30.500.10">
    <property type="entry name" value="MHC class I-like antigen recognition-like"/>
    <property type="match status" value="1"/>
</dbReference>
<dbReference type="InterPro" id="IPR050208">
    <property type="entry name" value="MHC_class-I_related"/>
</dbReference>
<dbReference type="InterPro" id="IPR037055">
    <property type="entry name" value="MHC_I-like_Ag-recog_sf"/>
</dbReference>
<dbReference type="InterPro" id="IPR011162">
    <property type="entry name" value="MHC_I/II-like_Ag-recog"/>
</dbReference>
<dbReference type="InterPro" id="IPR029287">
    <property type="entry name" value="RAE-1"/>
</dbReference>
<dbReference type="PANTHER" id="PTHR16675">
    <property type="entry name" value="MHC CLASS I-RELATED"/>
    <property type="match status" value="1"/>
</dbReference>
<dbReference type="PANTHER" id="PTHR16675:SF64">
    <property type="entry name" value="RETINOIC ACID EARLY TRANSCRIPT 1E"/>
    <property type="match status" value="1"/>
</dbReference>
<dbReference type="Pfam" id="PF14586">
    <property type="entry name" value="MHC_I_2"/>
    <property type="match status" value="1"/>
</dbReference>
<dbReference type="SUPFAM" id="SSF54452">
    <property type="entry name" value="MHC antigen-recognition domain"/>
    <property type="match status" value="1"/>
</dbReference>
<sequence>MAKAAVTKRHHFMIQKLLILLSYGYTNGLDDAHSLRCNLTIKDPTPADPLWYEAKCFVGEILILHLSNINKTMTSGDPGETANATEVKKCLTQPLKNLCQKLRNKVSNTKVDTHKTNGYPHLQVTMIYPQSQGRTPSATWEFNISDSYFFTFYTENMSWRSANDESGVIMNKWKDDGEFVKQLKFLIHECSQKMDEFLKQSKEKPRSTSRSPSITQLTSTSPLPPPSHSTSKKGFISVGLIFISLLFAFAFAM</sequence>
<gene>
    <name type="primary">Raet1b</name>
</gene>
<evidence type="ECO:0000255" key="1"/>
<evidence type="ECO:0000256" key="2">
    <source>
        <dbReference type="SAM" id="MobiDB-lite"/>
    </source>
</evidence>
<evidence type="ECO:0000269" key="3">
    <source>
    </source>
</evidence>
<evidence type="ECO:0000269" key="4">
    <source>
    </source>
</evidence>
<evidence type="ECO:0000269" key="5">
    <source>
    </source>
</evidence>
<evidence type="ECO:0000269" key="6">
    <source>
    </source>
</evidence>
<evidence type="ECO:0000269" key="7">
    <source>
    </source>
</evidence>
<evidence type="ECO:0000305" key="8"/>
<evidence type="ECO:0000312" key="9">
    <source>
        <dbReference type="EMBL" id="BAA19485.1"/>
    </source>
</evidence>
<evidence type="ECO:0007829" key="10">
    <source>
        <dbReference type="PDB" id="1JFM"/>
    </source>
</evidence>
<evidence type="ECO:0007829" key="11">
    <source>
        <dbReference type="PDB" id="4PP8"/>
    </source>
</evidence>
<accession>O08603</accession>
<accession>A2RS95</accession>
<reference evidence="8" key="1">
    <citation type="journal article" date="1996" name="J. Biochem.">
        <title>Isolation and characterization of retinoic acid-inducible cDNA clones in F9 cells: a novel cDNA family encodes cell surface proteins sharing partial homology with MHC class I molecules.</title>
        <authorList>
            <person name="Zou Z."/>
            <person name="Nomura M."/>
            <person name="Takihara Y."/>
            <person name="Yasunaga T."/>
            <person name="Shimada K."/>
        </authorList>
    </citation>
    <scope>NUCLEOTIDE SEQUENCE [MRNA]</scope>
    <scope>DEVELOPMENTAL STAGE</scope>
    <scope>INDUCTION</scope>
</reference>
<reference key="2">
    <citation type="journal article" date="2004" name="Genome Res.">
        <title>The status, quality, and expansion of the NIH full-length cDNA project: the Mammalian Gene Collection (MGC).</title>
        <authorList>
            <consortium name="The MGC Project Team"/>
        </authorList>
    </citation>
    <scope>NUCLEOTIDE SEQUENCE [LARGE SCALE MRNA]</scope>
    <source>
        <tissue>Brain</tissue>
    </source>
</reference>
<reference evidence="8" key="3">
    <citation type="journal article" date="2000" name="Immunity">
        <title>Retinoic acid early inducible genes define a ligand family for the activating NKG2D receptor in mice.</title>
        <authorList>
            <person name="Cerwenka A."/>
            <person name="Bakker A.B."/>
            <person name="McClanahan T."/>
            <person name="Wagner J."/>
            <person name="Wu J."/>
            <person name="Phillips J.H."/>
            <person name="Lanier L.L."/>
        </authorList>
    </citation>
    <scope>FUNCTION</scope>
    <scope>SUBCELLULAR LOCATION</scope>
    <scope>DEVELOPMENTAL STAGE</scope>
    <source>
        <strain>ddY</strain>
        <tissue>Lung</tissue>
    </source>
</reference>
<reference evidence="8" key="4">
    <citation type="journal article" date="1996" name="J. Biochem.">
        <title>Genomic structures and characterization of Rae1 family members encoding GPI-anchored cell surface proteins and expressed predominantly in embryonic mouse brain.</title>
        <authorList>
            <person name="Nomura M."/>
            <person name="Zou Z."/>
            <person name="Joh T."/>
            <person name="Takihara Y."/>
            <person name="Matsuda Y."/>
            <person name="Shimada K."/>
        </authorList>
    </citation>
    <scope>SUBCELLULAR LOCATION</scope>
    <scope>TISSUE SPECIFICITY</scope>
    <scope>GLYCOSYLATION</scope>
</reference>
<reference key="5">
    <citation type="journal article" date="2000" name="Nat. Immunol.">
        <title>Ligands for the murine NKG2D receptor: expression by tumor cells and activation of NK cells and macrophages.</title>
        <authorList>
            <person name="Diefenbach A."/>
            <person name="Jamieson A.M."/>
            <person name="Liu S.D."/>
            <person name="Shastri N."/>
            <person name="Raulet D.H."/>
        </authorList>
    </citation>
    <scope>FUNCTION AS A LIGAND FOR KLRK1</scope>
</reference>
<reference key="6">
    <citation type="journal article" date="2001" name="Nature">
        <title>Rae1 and H60 ligands of the NKG2D receptor stimulate tumour immunity.</title>
        <authorList>
            <person name="Diefenbach A."/>
            <person name="Jensen E.R."/>
            <person name="Jamieson A.M."/>
            <person name="Raulet D.H."/>
        </authorList>
    </citation>
    <scope>FUNCTION AS A LIGAND FOR KLRK1</scope>
</reference>
<reference key="7">
    <citation type="journal article" date="2002" name="Immunity">
        <title>Crystal structures of RAE-1beta and its complex with the activating immunoreceptor NKG2D.</title>
        <authorList>
            <person name="Li P."/>
            <person name="McDermott G."/>
            <person name="Strong R.K."/>
        </authorList>
    </citation>
    <scope>X-RAY CRYSTALLOGRAPHY (2.85 ANGSTROMS) OF 30-204</scope>
    <scope>X-RAY CRYSTALLOGRAPHY (1.95 ANGSTROMS) OF 30-204 IN COMPLEX WITH KLRK1</scope>
</reference>
<proteinExistence type="evidence at protein level"/>
<keyword id="KW-0002">3D-structure</keyword>
<keyword id="KW-1003">Cell membrane</keyword>
<keyword id="KW-1015">Disulfide bond</keyword>
<keyword id="KW-0325">Glycoprotein</keyword>
<keyword id="KW-0336">GPI-anchor</keyword>
<keyword id="KW-0449">Lipoprotein</keyword>
<keyword id="KW-0472">Membrane</keyword>
<keyword id="KW-1185">Reference proteome</keyword>
<keyword id="KW-0732">Signal</keyword>
<comment type="function">
    <text evidence="3 4 5">Acts as a ligand for KLRK1.</text>
</comment>
<comment type="subcellular location">
    <subcellularLocation>
        <location evidence="3 7">Cell membrane</location>
        <topology evidence="3 7">Lipid-anchor</topology>
        <topology evidence="3 7">GPI-anchor</topology>
    </subcellularLocation>
</comment>
<comment type="tissue specificity">
    <text evidence="7">Expressed predominantly in embryonic brain.</text>
</comment>
<comment type="developmental stage">
    <text evidence="3 6">Expressed predominantly during early embryogenesis. Detected at high levels in 7, 11 and 14-day-old embryos but not in 18-day-old embryos. Very low levels detected in adults.</text>
</comment>
<comment type="induction">
    <text evidence="6">By retinoic acid.</text>
</comment>
<comment type="PTM">
    <text evidence="7">Glycosylated.</text>
</comment>
<comment type="similarity">
    <text evidence="8">Belongs to the NKG2D ligand family.</text>
</comment>
<organism evidence="9">
    <name type="scientific">Mus musculus</name>
    <name type="common">Mouse</name>
    <dbReference type="NCBI Taxonomy" id="10090"/>
    <lineage>
        <taxon>Eukaryota</taxon>
        <taxon>Metazoa</taxon>
        <taxon>Chordata</taxon>
        <taxon>Craniata</taxon>
        <taxon>Vertebrata</taxon>
        <taxon>Euteleostomi</taxon>
        <taxon>Mammalia</taxon>
        <taxon>Eutheria</taxon>
        <taxon>Euarchontoglires</taxon>
        <taxon>Glires</taxon>
        <taxon>Rodentia</taxon>
        <taxon>Myomorpha</taxon>
        <taxon>Muroidea</taxon>
        <taxon>Muridae</taxon>
        <taxon>Murinae</taxon>
        <taxon>Mus</taxon>
        <taxon>Mus</taxon>
    </lineage>
</organism>
<name>RAE1B_MOUSE</name>
<feature type="signal peptide" evidence="1">
    <location>
        <begin position="1"/>
        <end position="28"/>
    </location>
</feature>
<feature type="chain" id="PRO_0000019729" description="Retinoic acid early-inducible protein 1-beta">
    <location>
        <begin position="29"/>
        <end position="229"/>
    </location>
</feature>
<feature type="propeptide" id="PRO_0000019730" description="Removed in mature form" evidence="1">
    <location>
        <begin position="230"/>
        <end position="253"/>
    </location>
</feature>
<feature type="region of interest" description="Disordered" evidence="2">
    <location>
        <begin position="198"/>
        <end position="230"/>
    </location>
</feature>
<feature type="compositionally biased region" description="Low complexity" evidence="2">
    <location>
        <begin position="211"/>
        <end position="221"/>
    </location>
</feature>
<feature type="lipid moiety-binding region" description="GPI-anchor amidated serine" evidence="1">
    <location>
        <position position="229"/>
    </location>
</feature>
<feature type="glycosylation site" description="N-linked (GlcNAc...) asparagine" evidence="1">
    <location>
        <position position="38"/>
    </location>
</feature>
<feature type="glycosylation site" description="N-linked (GlcNAc...) asparagine" evidence="1">
    <location>
        <position position="70"/>
    </location>
</feature>
<feature type="glycosylation site" description="N-linked (GlcNAc...) asparagine" evidence="1">
    <location>
        <position position="83"/>
    </location>
</feature>
<feature type="glycosylation site" description="N-linked (GlcNAc...) asparagine" evidence="1">
    <location>
        <position position="143"/>
    </location>
</feature>
<feature type="glycosylation site" description="N-linked (GlcNAc...) asparagine" evidence="1">
    <location>
        <position position="156"/>
    </location>
</feature>
<feature type="disulfide bond">
    <location>
        <begin position="37"/>
        <end position="56"/>
    </location>
</feature>
<feature type="disulfide bond">
    <location>
        <begin position="90"/>
        <end position="190"/>
    </location>
</feature>
<feature type="strand" evidence="11">
    <location>
        <begin position="35"/>
        <end position="41"/>
    </location>
</feature>
<feature type="strand" evidence="11">
    <location>
        <begin position="52"/>
        <end position="58"/>
    </location>
</feature>
<feature type="strand" evidence="11">
    <location>
        <begin position="61"/>
        <end position="68"/>
    </location>
</feature>
<feature type="helix" evidence="11">
    <location>
        <begin position="85"/>
        <end position="107"/>
    </location>
</feature>
<feature type="strand" evidence="11">
    <location>
        <begin position="122"/>
        <end position="128"/>
    </location>
</feature>
<feature type="strand" evidence="10">
    <location>
        <begin position="133"/>
        <end position="135"/>
    </location>
</feature>
<feature type="strand" evidence="11">
    <location>
        <begin position="139"/>
        <end position="144"/>
    </location>
</feature>
<feature type="turn" evidence="11">
    <location>
        <begin position="145"/>
        <end position="147"/>
    </location>
</feature>
<feature type="strand" evidence="11">
    <location>
        <begin position="148"/>
        <end position="153"/>
    </location>
</feature>
<feature type="turn" evidence="11">
    <location>
        <begin position="154"/>
        <end position="157"/>
    </location>
</feature>
<feature type="strand" evidence="11">
    <location>
        <begin position="158"/>
        <end position="163"/>
    </location>
</feature>
<feature type="helix" evidence="11">
    <location>
        <begin position="164"/>
        <end position="174"/>
    </location>
</feature>
<feature type="helix" evidence="11">
    <location>
        <begin position="177"/>
        <end position="199"/>
    </location>
</feature>